<gene>
    <name evidence="1" type="primary">lolD2</name>
    <name type="ordered locus">Rru_A2748</name>
</gene>
<name>LOLD2_RHORT</name>
<evidence type="ECO:0000255" key="1">
    <source>
        <dbReference type="HAMAP-Rule" id="MF_01708"/>
    </source>
</evidence>
<accession>Q2RQQ0</accession>
<keyword id="KW-0067">ATP-binding</keyword>
<keyword id="KW-0997">Cell inner membrane</keyword>
<keyword id="KW-1003">Cell membrane</keyword>
<keyword id="KW-0472">Membrane</keyword>
<keyword id="KW-0547">Nucleotide-binding</keyword>
<keyword id="KW-1185">Reference proteome</keyword>
<keyword id="KW-1278">Translocase</keyword>
<keyword id="KW-0813">Transport</keyword>
<reference key="1">
    <citation type="journal article" date="2011" name="Stand. Genomic Sci.">
        <title>Complete genome sequence of Rhodospirillum rubrum type strain (S1).</title>
        <authorList>
            <person name="Munk A.C."/>
            <person name="Copeland A."/>
            <person name="Lucas S."/>
            <person name="Lapidus A."/>
            <person name="Del Rio T.G."/>
            <person name="Barry K."/>
            <person name="Detter J.C."/>
            <person name="Hammon N."/>
            <person name="Israni S."/>
            <person name="Pitluck S."/>
            <person name="Brettin T."/>
            <person name="Bruce D."/>
            <person name="Han C."/>
            <person name="Tapia R."/>
            <person name="Gilna P."/>
            <person name="Schmutz J."/>
            <person name="Larimer F."/>
            <person name="Land M."/>
            <person name="Kyrpides N.C."/>
            <person name="Mavromatis K."/>
            <person name="Richardson P."/>
            <person name="Rohde M."/>
            <person name="Goeker M."/>
            <person name="Klenk H.P."/>
            <person name="Zhang Y."/>
            <person name="Roberts G.P."/>
            <person name="Reslewic S."/>
            <person name="Schwartz D.C."/>
        </authorList>
    </citation>
    <scope>NUCLEOTIDE SEQUENCE [LARGE SCALE GENOMIC DNA]</scope>
    <source>
        <strain>ATCC 11170 / ATH 1.1.1 / DSM 467 / LMG 4362 / NCIMB 8255 / S1</strain>
    </source>
</reference>
<proteinExistence type="inferred from homology"/>
<sequence>MTLPLVEARSLSKSFGEGELASQVLKRLSFDINAGERVALVGPSGSGKSTLLAVLGTLLGATSGDLRILGQPMIGLPEAELARFRNRNLGFVFQFHHLLPDFTALENVLFPAAAGKGRETRLMRERARALLVRVGLEDRVDYGARKLSGGQKQRVALARALINRPALVLADEPTGNLDSGPAEQVMNLLGEINAEDGTTFLISTHDAAVAARCTRRMELLDGRLVGQDPAD</sequence>
<feature type="chain" id="PRO_0000272143" description="Lipoprotein-releasing system ATP-binding protein LolD 2">
    <location>
        <begin position="1"/>
        <end position="231"/>
    </location>
</feature>
<feature type="domain" description="ABC transporter" evidence="1">
    <location>
        <begin position="6"/>
        <end position="230"/>
    </location>
</feature>
<feature type="binding site" evidence="1">
    <location>
        <begin position="42"/>
        <end position="49"/>
    </location>
    <ligand>
        <name>ATP</name>
        <dbReference type="ChEBI" id="CHEBI:30616"/>
    </ligand>
</feature>
<comment type="function">
    <text evidence="1">Part of the ABC transporter complex LolCDE involved in the translocation of mature outer membrane-directed lipoproteins, from the inner membrane to the periplasmic chaperone, LolA. Responsible for the formation of the LolA-lipoprotein complex in an ATP-dependent manner.</text>
</comment>
<comment type="subunit">
    <text evidence="1">The complex is composed of two ATP-binding proteins (LolD) and two transmembrane proteins (LolC and LolE).</text>
</comment>
<comment type="subcellular location">
    <subcellularLocation>
        <location evidence="1">Cell inner membrane</location>
        <topology evidence="1">Peripheral membrane protein</topology>
    </subcellularLocation>
</comment>
<comment type="similarity">
    <text evidence="1">Belongs to the ABC transporter superfamily. Lipoprotein translocase (TC 3.A.1.125) family.</text>
</comment>
<dbReference type="EC" id="7.6.2.-" evidence="1"/>
<dbReference type="EMBL" id="CP000230">
    <property type="protein sequence ID" value="ABC23545.1"/>
    <property type="molecule type" value="Genomic_DNA"/>
</dbReference>
<dbReference type="RefSeq" id="WP_011390558.1">
    <property type="nucleotide sequence ID" value="NC_007643.1"/>
</dbReference>
<dbReference type="RefSeq" id="YP_427832.1">
    <property type="nucleotide sequence ID" value="NC_007643.1"/>
</dbReference>
<dbReference type="SMR" id="Q2RQQ0"/>
<dbReference type="STRING" id="269796.Rru_A2748"/>
<dbReference type="EnsemblBacteria" id="ABC23545">
    <property type="protein sequence ID" value="ABC23545"/>
    <property type="gene ID" value="Rru_A2748"/>
</dbReference>
<dbReference type="KEGG" id="rru:Rru_A2748"/>
<dbReference type="PATRIC" id="fig|269796.9.peg.2856"/>
<dbReference type="eggNOG" id="COG1136">
    <property type="taxonomic scope" value="Bacteria"/>
</dbReference>
<dbReference type="HOGENOM" id="CLU_000604_1_22_5"/>
<dbReference type="PhylomeDB" id="Q2RQQ0"/>
<dbReference type="Proteomes" id="UP000001929">
    <property type="component" value="Chromosome"/>
</dbReference>
<dbReference type="GO" id="GO:0005886">
    <property type="term" value="C:plasma membrane"/>
    <property type="evidence" value="ECO:0007669"/>
    <property type="project" value="UniProtKB-SubCell"/>
</dbReference>
<dbReference type="GO" id="GO:0005524">
    <property type="term" value="F:ATP binding"/>
    <property type="evidence" value="ECO:0007669"/>
    <property type="project" value="UniProtKB-KW"/>
</dbReference>
<dbReference type="GO" id="GO:0016887">
    <property type="term" value="F:ATP hydrolysis activity"/>
    <property type="evidence" value="ECO:0007669"/>
    <property type="project" value="InterPro"/>
</dbReference>
<dbReference type="GO" id="GO:0022857">
    <property type="term" value="F:transmembrane transporter activity"/>
    <property type="evidence" value="ECO:0007669"/>
    <property type="project" value="TreeGrafter"/>
</dbReference>
<dbReference type="CDD" id="cd03255">
    <property type="entry name" value="ABC_MJ0796_LolCDE_FtsE"/>
    <property type="match status" value="1"/>
</dbReference>
<dbReference type="FunFam" id="3.40.50.300:FF:000032">
    <property type="entry name" value="Export ABC transporter ATP-binding protein"/>
    <property type="match status" value="1"/>
</dbReference>
<dbReference type="Gene3D" id="3.40.50.300">
    <property type="entry name" value="P-loop containing nucleotide triphosphate hydrolases"/>
    <property type="match status" value="1"/>
</dbReference>
<dbReference type="InterPro" id="IPR003593">
    <property type="entry name" value="AAA+_ATPase"/>
</dbReference>
<dbReference type="InterPro" id="IPR003439">
    <property type="entry name" value="ABC_transporter-like_ATP-bd"/>
</dbReference>
<dbReference type="InterPro" id="IPR017871">
    <property type="entry name" value="ABC_transporter-like_CS"/>
</dbReference>
<dbReference type="InterPro" id="IPR015854">
    <property type="entry name" value="ABC_transpr_LolD-like"/>
</dbReference>
<dbReference type="InterPro" id="IPR017911">
    <property type="entry name" value="MacB-like_ATP-bd"/>
</dbReference>
<dbReference type="InterPro" id="IPR027417">
    <property type="entry name" value="P-loop_NTPase"/>
</dbReference>
<dbReference type="PANTHER" id="PTHR24220">
    <property type="entry name" value="IMPORT ATP-BINDING PROTEIN"/>
    <property type="match status" value="1"/>
</dbReference>
<dbReference type="PANTHER" id="PTHR24220:SF689">
    <property type="entry name" value="LIPOPROTEIN-RELEASING SYSTEM ATP-BINDING PROTEIN LOLD"/>
    <property type="match status" value="1"/>
</dbReference>
<dbReference type="Pfam" id="PF00005">
    <property type="entry name" value="ABC_tran"/>
    <property type="match status" value="1"/>
</dbReference>
<dbReference type="SMART" id="SM00382">
    <property type="entry name" value="AAA"/>
    <property type="match status" value="1"/>
</dbReference>
<dbReference type="SUPFAM" id="SSF52540">
    <property type="entry name" value="P-loop containing nucleoside triphosphate hydrolases"/>
    <property type="match status" value="1"/>
</dbReference>
<dbReference type="PROSITE" id="PS00211">
    <property type="entry name" value="ABC_TRANSPORTER_1"/>
    <property type="match status" value="1"/>
</dbReference>
<dbReference type="PROSITE" id="PS50893">
    <property type="entry name" value="ABC_TRANSPORTER_2"/>
    <property type="match status" value="1"/>
</dbReference>
<dbReference type="PROSITE" id="PS51244">
    <property type="entry name" value="LOLD"/>
    <property type="match status" value="1"/>
</dbReference>
<protein>
    <recommendedName>
        <fullName evidence="1">Lipoprotein-releasing system ATP-binding protein LolD 2</fullName>
        <ecNumber evidence="1">7.6.2.-</ecNumber>
    </recommendedName>
</protein>
<organism>
    <name type="scientific">Rhodospirillum rubrum (strain ATCC 11170 / ATH 1.1.1 / DSM 467 / LMG 4362 / NCIMB 8255 / S1)</name>
    <dbReference type="NCBI Taxonomy" id="269796"/>
    <lineage>
        <taxon>Bacteria</taxon>
        <taxon>Pseudomonadati</taxon>
        <taxon>Pseudomonadota</taxon>
        <taxon>Alphaproteobacteria</taxon>
        <taxon>Rhodospirillales</taxon>
        <taxon>Rhodospirillaceae</taxon>
        <taxon>Rhodospirillum</taxon>
    </lineage>
</organism>